<name>CIAO1_ASPTN</name>
<evidence type="ECO:0000255" key="1">
    <source>
        <dbReference type="HAMAP-Rule" id="MF_03037"/>
    </source>
</evidence>
<feature type="chain" id="PRO_0000382506" description="Probable cytosolic iron-sulfur protein assembly protein 1">
    <location>
        <begin position="1"/>
        <end position="422"/>
    </location>
</feature>
<feature type="repeat" description="WD 1">
    <location>
        <begin position="13"/>
        <end position="56"/>
    </location>
</feature>
<feature type="repeat" description="WD 2">
    <location>
        <begin position="60"/>
        <end position="102"/>
    </location>
</feature>
<feature type="repeat" description="WD 3">
    <location>
        <begin position="130"/>
        <end position="169"/>
    </location>
</feature>
<feature type="repeat" description="WD 4">
    <location>
        <begin position="177"/>
        <end position="220"/>
    </location>
</feature>
<feature type="repeat" description="WD 5">
    <location>
        <begin position="236"/>
        <end position="281"/>
    </location>
</feature>
<feature type="repeat" description="WD 6">
    <location>
        <begin position="315"/>
        <end position="354"/>
    </location>
</feature>
<feature type="repeat" description="WD 7">
    <location>
        <begin position="379"/>
        <end position="420"/>
    </location>
</feature>
<gene>
    <name type="primary">cia1</name>
    <name type="ORF">ATEG_08514</name>
</gene>
<comment type="function">
    <text evidence="1">Essential component of the cytosolic iron-sulfur (Fe/S) protein assembly machinery. Required for the maturation of extramitochondrial Fe/S proteins.</text>
</comment>
<comment type="similarity">
    <text evidence="1">Belongs to the WD repeat CIA1 family.</text>
</comment>
<sequence>MARTTAHITLLSDLTPPSQERTWLTAPHPTLPIVATCSSDKTVRVYSLSNFRLLSTITGGHKRSVRTCAWKPHVQGESVLATGSFDATVGIWRRWDSYGLLSSDHTTAAAASEDADSDSDEWRFAVLLDGHDSEVKSVSWSASGMLLATCARDKSIWIWEDLDDGDNNFETVAVMQEHEGDVKCVAWHPAEECLASGSYDDTIRLWREDLDDWGQVACLKGHGGTVWFVDWEGVENVPAGLQGEEGKWKESRALSGPRLASCSDDRTVRIWRRVPKEQLQQQQAGTPFGGTGIPSIIRPTGTDETWEEEAVLPKMHELPVYAVAWSKRTGLLASVGADGRLVLYEERFVDGSAQAMDTDGPASAPLSTEWVAVGVVEGAHGIYEINHVAWAKRADRGREEGKDEEVLITTADDGSVKVWTVR</sequence>
<keyword id="KW-1185">Reference proteome</keyword>
<keyword id="KW-0677">Repeat</keyword>
<keyword id="KW-0853">WD repeat</keyword>
<reference key="1">
    <citation type="submission" date="2005-09" db="EMBL/GenBank/DDBJ databases">
        <title>Annotation of the Aspergillus terreus NIH2624 genome.</title>
        <authorList>
            <person name="Birren B.W."/>
            <person name="Lander E.S."/>
            <person name="Galagan J.E."/>
            <person name="Nusbaum C."/>
            <person name="Devon K."/>
            <person name="Henn M."/>
            <person name="Ma L.-J."/>
            <person name="Jaffe D.B."/>
            <person name="Butler J."/>
            <person name="Alvarez P."/>
            <person name="Gnerre S."/>
            <person name="Grabherr M."/>
            <person name="Kleber M."/>
            <person name="Mauceli E.W."/>
            <person name="Brockman W."/>
            <person name="Rounsley S."/>
            <person name="Young S.K."/>
            <person name="LaButti K."/>
            <person name="Pushparaj V."/>
            <person name="DeCaprio D."/>
            <person name="Crawford M."/>
            <person name="Koehrsen M."/>
            <person name="Engels R."/>
            <person name="Montgomery P."/>
            <person name="Pearson M."/>
            <person name="Howarth C."/>
            <person name="Larson L."/>
            <person name="Luoma S."/>
            <person name="White J."/>
            <person name="Alvarado L."/>
            <person name="Kodira C.D."/>
            <person name="Zeng Q."/>
            <person name="Oleary S."/>
            <person name="Yandava C."/>
            <person name="Denning D.W."/>
            <person name="Nierman W.C."/>
            <person name="Milne T."/>
            <person name="Madden K."/>
        </authorList>
    </citation>
    <scope>NUCLEOTIDE SEQUENCE [LARGE SCALE GENOMIC DNA]</scope>
    <source>
        <strain>NIH 2624 / FGSC A1156</strain>
    </source>
</reference>
<accession>Q0CCS0</accession>
<proteinExistence type="inferred from homology"/>
<protein>
    <recommendedName>
        <fullName evidence="1">Probable cytosolic iron-sulfur protein assembly protein 1</fullName>
    </recommendedName>
</protein>
<organism>
    <name type="scientific">Aspergillus terreus (strain NIH 2624 / FGSC A1156)</name>
    <dbReference type="NCBI Taxonomy" id="341663"/>
    <lineage>
        <taxon>Eukaryota</taxon>
        <taxon>Fungi</taxon>
        <taxon>Dikarya</taxon>
        <taxon>Ascomycota</taxon>
        <taxon>Pezizomycotina</taxon>
        <taxon>Eurotiomycetes</taxon>
        <taxon>Eurotiomycetidae</taxon>
        <taxon>Eurotiales</taxon>
        <taxon>Aspergillaceae</taxon>
        <taxon>Aspergillus</taxon>
        <taxon>Aspergillus subgen. Circumdati</taxon>
    </lineage>
</organism>
<dbReference type="EMBL" id="CH476606">
    <property type="protein sequence ID" value="EAU30646.1"/>
    <property type="molecule type" value="Genomic_DNA"/>
</dbReference>
<dbReference type="RefSeq" id="XP_001217100.1">
    <property type="nucleotide sequence ID" value="XM_001217099.1"/>
</dbReference>
<dbReference type="SMR" id="Q0CCS0"/>
<dbReference type="STRING" id="341663.Q0CCS0"/>
<dbReference type="EnsemblFungi" id="EAU30646">
    <property type="protein sequence ID" value="EAU30646"/>
    <property type="gene ID" value="ATEG_08514"/>
</dbReference>
<dbReference type="GeneID" id="4323537"/>
<dbReference type="VEuPathDB" id="FungiDB:ATEG_08514"/>
<dbReference type="eggNOG" id="KOG0645">
    <property type="taxonomic scope" value="Eukaryota"/>
</dbReference>
<dbReference type="HOGENOM" id="CLU_000288_57_8_1"/>
<dbReference type="OMA" id="IREIRWS"/>
<dbReference type="OrthoDB" id="284782at2759"/>
<dbReference type="Proteomes" id="UP000007963">
    <property type="component" value="Unassembled WGS sequence"/>
</dbReference>
<dbReference type="GO" id="GO:0097361">
    <property type="term" value="C:cytosolic [4Fe-4S] assembly targeting complex"/>
    <property type="evidence" value="ECO:0007669"/>
    <property type="project" value="InterPro"/>
</dbReference>
<dbReference type="GO" id="GO:0016226">
    <property type="term" value="P:iron-sulfur cluster assembly"/>
    <property type="evidence" value="ECO:0007669"/>
    <property type="project" value="UniProtKB-UniRule"/>
</dbReference>
<dbReference type="FunFam" id="2.130.10.10:FF:000816">
    <property type="entry name" value="Probable cytosolic iron-sulfur protein assembly protein 1"/>
    <property type="match status" value="1"/>
</dbReference>
<dbReference type="Gene3D" id="2.130.10.10">
    <property type="entry name" value="YVTN repeat-like/Quinoprotein amine dehydrogenase"/>
    <property type="match status" value="1"/>
</dbReference>
<dbReference type="HAMAP" id="MF_03037">
    <property type="entry name" value="ciao1"/>
    <property type="match status" value="1"/>
</dbReference>
<dbReference type="InterPro" id="IPR028608">
    <property type="entry name" value="CIAO1/Cia1"/>
</dbReference>
<dbReference type="InterPro" id="IPR020472">
    <property type="entry name" value="G-protein_beta_WD-40_rep"/>
</dbReference>
<dbReference type="InterPro" id="IPR015943">
    <property type="entry name" value="WD40/YVTN_repeat-like_dom_sf"/>
</dbReference>
<dbReference type="InterPro" id="IPR036322">
    <property type="entry name" value="WD40_repeat_dom_sf"/>
</dbReference>
<dbReference type="InterPro" id="IPR001680">
    <property type="entry name" value="WD40_rpt"/>
</dbReference>
<dbReference type="PANTHER" id="PTHR19920:SF0">
    <property type="entry name" value="CYTOSOLIC IRON-SULFUR PROTEIN ASSEMBLY PROTEIN CIAO1-RELATED"/>
    <property type="match status" value="1"/>
</dbReference>
<dbReference type="PANTHER" id="PTHR19920">
    <property type="entry name" value="WD40 PROTEIN CIAO1"/>
    <property type="match status" value="1"/>
</dbReference>
<dbReference type="Pfam" id="PF00400">
    <property type="entry name" value="WD40"/>
    <property type="match status" value="6"/>
</dbReference>
<dbReference type="PRINTS" id="PR00320">
    <property type="entry name" value="GPROTEINBRPT"/>
</dbReference>
<dbReference type="SMART" id="SM00320">
    <property type="entry name" value="WD40"/>
    <property type="match status" value="7"/>
</dbReference>
<dbReference type="SUPFAM" id="SSF50978">
    <property type="entry name" value="WD40 repeat-like"/>
    <property type="match status" value="1"/>
</dbReference>
<dbReference type="PROSITE" id="PS50082">
    <property type="entry name" value="WD_REPEATS_2"/>
    <property type="match status" value="4"/>
</dbReference>
<dbReference type="PROSITE" id="PS50294">
    <property type="entry name" value="WD_REPEATS_REGION"/>
    <property type="match status" value="1"/>
</dbReference>